<organism>
    <name type="scientific">Schizosaccharomyces pombe (strain 972 / ATCC 24843)</name>
    <name type="common">Fission yeast</name>
    <dbReference type="NCBI Taxonomy" id="284812"/>
    <lineage>
        <taxon>Eukaryota</taxon>
        <taxon>Fungi</taxon>
        <taxon>Dikarya</taxon>
        <taxon>Ascomycota</taxon>
        <taxon>Taphrinomycotina</taxon>
        <taxon>Schizosaccharomycetes</taxon>
        <taxon>Schizosaccharomycetales</taxon>
        <taxon>Schizosaccharomycetaceae</taxon>
        <taxon>Schizosaccharomyces</taxon>
    </lineage>
</organism>
<evidence type="ECO:0000255" key="1">
    <source>
        <dbReference type="PROSITE-ProRule" id="PRU00080"/>
    </source>
</evidence>
<evidence type="ECO:0000256" key="2">
    <source>
        <dbReference type="SAM" id="MobiDB-lite"/>
    </source>
</evidence>
<evidence type="ECO:0000269" key="3">
    <source>
    </source>
</evidence>
<evidence type="ECO:0000269" key="4">
    <source>
    </source>
</evidence>
<evidence type="ECO:0000269" key="5">
    <source>
    </source>
</evidence>
<evidence type="ECO:0000269" key="6">
    <source>
    </source>
</evidence>
<name>POF1_SCHPO</name>
<dbReference type="EMBL" id="AB032410">
    <property type="protein sequence ID" value="BAA84528.1"/>
    <property type="molecule type" value="Genomic_DNA"/>
</dbReference>
<dbReference type="EMBL" id="CU329670">
    <property type="protein sequence ID" value="CAB08168.1"/>
    <property type="molecule type" value="Genomic_DNA"/>
</dbReference>
<dbReference type="PIR" id="T38932">
    <property type="entry name" value="T38932"/>
</dbReference>
<dbReference type="RefSeq" id="NP_593310.1">
    <property type="nucleotide sequence ID" value="NM_001018741.2"/>
</dbReference>
<dbReference type="SMR" id="P87053"/>
<dbReference type="BioGRID" id="279356">
    <property type="interactions" value="6"/>
</dbReference>
<dbReference type="FunCoup" id="P87053">
    <property type="interactions" value="127"/>
</dbReference>
<dbReference type="IntAct" id="P87053">
    <property type="interactions" value="3"/>
</dbReference>
<dbReference type="STRING" id="284812.P87053"/>
<dbReference type="iPTMnet" id="P87053"/>
<dbReference type="PaxDb" id="4896-SPAC57A10.05c.1"/>
<dbReference type="EnsemblFungi" id="SPAC57A10.05c.1">
    <property type="protein sequence ID" value="SPAC57A10.05c.1:pep"/>
    <property type="gene ID" value="SPAC57A10.05c"/>
</dbReference>
<dbReference type="GeneID" id="2542914"/>
<dbReference type="KEGG" id="spo:2542914"/>
<dbReference type="PomBase" id="SPAC57A10.05c">
    <property type="gene designation" value="pof1"/>
</dbReference>
<dbReference type="VEuPathDB" id="FungiDB:SPAC57A10.05c"/>
<dbReference type="eggNOG" id="KOG0274">
    <property type="taxonomic scope" value="Eukaryota"/>
</dbReference>
<dbReference type="HOGENOM" id="CLU_000288_103_1_1"/>
<dbReference type="InParanoid" id="P87053"/>
<dbReference type="OMA" id="GIAHVWS"/>
<dbReference type="PhylomeDB" id="P87053"/>
<dbReference type="PRO" id="PR:P87053"/>
<dbReference type="Proteomes" id="UP000002485">
    <property type="component" value="Chromosome I"/>
</dbReference>
<dbReference type="GO" id="GO:0030126">
    <property type="term" value="C:COPI vesicle coat"/>
    <property type="evidence" value="ECO:0000318"/>
    <property type="project" value="GO_Central"/>
</dbReference>
<dbReference type="GO" id="GO:0005634">
    <property type="term" value="C:nucleus"/>
    <property type="evidence" value="ECO:0007005"/>
    <property type="project" value="PomBase"/>
</dbReference>
<dbReference type="GO" id="GO:0019005">
    <property type="term" value="C:SCF ubiquitin ligase complex"/>
    <property type="evidence" value="ECO:0000314"/>
    <property type="project" value="PomBase"/>
</dbReference>
<dbReference type="GO" id="GO:1990756">
    <property type="term" value="F:ubiquitin-like ligase-substrate adaptor activity"/>
    <property type="evidence" value="ECO:0000353"/>
    <property type="project" value="PomBase"/>
</dbReference>
<dbReference type="GO" id="GO:0006888">
    <property type="term" value="P:endoplasmic reticulum to Golgi vesicle-mediated transport"/>
    <property type="evidence" value="ECO:0000318"/>
    <property type="project" value="GO_Central"/>
</dbReference>
<dbReference type="GO" id="GO:0006891">
    <property type="term" value="P:intra-Golgi vesicle-mediated transport"/>
    <property type="evidence" value="ECO:0000318"/>
    <property type="project" value="GO_Central"/>
</dbReference>
<dbReference type="GO" id="GO:0006886">
    <property type="term" value="P:intracellular protein transport"/>
    <property type="evidence" value="ECO:0000318"/>
    <property type="project" value="GO_Central"/>
</dbReference>
<dbReference type="GO" id="GO:0006890">
    <property type="term" value="P:retrograde vesicle-mediated transport, Golgi to endoplasmic reticulum"/>
    <property type="evidence" value="ECO:0000318"/>
    <property type="project" value="GO_Central"/>
</dbReference>
<dbReference type="GO" id="GO:0031146">
    <property type="term" value="P:SCF-dependent proteasomal ubiquitin-dependent protein catabolic process"/>
    <property type="evidence" value="ECO:0000305"/>
    <property type="project" value="PomBase"/>
</dbReference>
<dbReference type="CDD" id="cd22147">
    <property type="entry name" value="F-box_SpPof1-like"/>
    <property type="match status" value="1"/>
</dbReference>
<dbReference type="CDD" id="cd00200">
    <property type="entry name" value="WD40"/>
    <property type="match status" value="1"/>
</dbReference>
<dbReference type="FunFam" id="1.20.1280.50:FF:000016">
    <property type="entry name" value="E3 ubiquitin ligase complex SCF subunit sconB"/>
    <property type="match status" value="1"/>
</dbReference>
<dbReference type="FunFam" id="2.130.10.10:FF:000715">
    <property type="entry name" value="F-box protein MET30"/>
    <property type="match status" value="1"/>
</dbReference>
<dbReference type="Gene3D" id="1.20.1280.50">
    <property type="match status" value="1"/>
</dbReference>
<dbReference type="Gene3D" id="2.130.10.10">
    <property type="entry name" value="YVTN repeat-like/Quinoprotein amine dehydrogenase"/>
    <property type="match status" value="2"/>
</dbReference>
<dbReference type="InterPro" id="IPR036047">
    <property type="entry name" value="F-box-like_dom_sf"/>
</dbReference>
<dbReference type="InterPro" id="IPR001810">
    <property type="entry name" value="F-box_dom"/>
</dbReference>
<dbReference type="InterPro" id="IPR020472">
    <property type="entry name" value="G-protein_beta_WD-40_rep"/>
</dbReference>
<dbReference type="InterPro" id="IPR051075">
    <property type="entry name" value="SCF_subunit_WD-repeat"/>
</dbReference>
<dbReference type="InterPro" id="IPR015943">
    <property type="entry name" value="WD40/YVTN_repeat-like_dom_sf"/>
</dbReference>
<dbReference type="InterPro" id="IPR019775">
    <property type="entry name" value="WD40_repeat_CS"/>
</dbReference>
<dbReference type="InterPro" id="IPR036322">
    <property type="entry name" value="WD40_repeat_dom_sf"/>
</dbReference>
<dbReference type="InterPro" id="IPR001680">
    <property type="entry name" value="WD40_rpt"/>
</dbReference>
<dbReference type="PANTHER" id="PTHR19872">
    <property type="entry name" value="UBIQUITIN LIGASE SPECIFICITY FACTOR/HREP PROTEIN"/>
    <property type="match status" value="1"/>
</dbReference>
<dbReference type="PANTHER" id="PTHR19872:SF9">
    <property type="entry name" value="UBIQUITIN-BINDING SDF UBIQUITIN LIGASE COMPLEX SUBUNIT"/>
    <property type="match status" value="1"/>
</dbReference>
<dbReference type="Pfam" id="PF12937">
    <property type="entry name" value="F-box-like"/>
    <property type="match status" value="1"/>
</dbReference>
<dbReference type="Pfam" id="PF00400">
    <property type="entry name" value="WD40"/>
    <property type="match status" value="7"/>
</dbReference>
<dbReference type="PRINTS" id="PR00320">
    <property type="entry name" value="GPROTEINBRPT"/>
</dbReference>
<dbReference type="SMART" id="SM00256">
    <property type="entry name" value="FBOX"/>
    <property type="match status" value="1"/>
</dbReference>
<dbReference type="SMART" id="SM00320">
    <property type="entry name" value="WD40"/>
    <property type="match status" value="7"/>
</dbReference>
<dbReference type="SUPFAM" id="SSF81383">
    <property type="entry name" value="F-box domain"/>
    <property type="match status" value="1"/>
</dbReference>
<dbReference type="SUPFAM" id="SSF50978">
    <property type="entry name" value="WD40 repeat-like"/>
    <property type="match status" value="1"/>
</dbReference>
<dbReference type="PROSITE" id="PS50181">
    <property type="entry name" value="FBOX"/>
    <property type="match status" value="1"/>
</dbReference>
<dbReference type="PROSITE" id="PS00678">
    <property type="entry name" value="WD_REPEATS_1"/>
    <property type="match status" value="2"/>
</dbReference>
<dbReference type="PROSITE" id="PS50082">
    <property type="entry name" value="WD_REPEATS_2"/>
    <property type="match status" value="7"/>
</dbReference>
<dbReference type="PROSITE" id="PS50294">
    <property type="entry name" value="WD_REPEATS_REGION"/>
    <property type="match status" value="1"/>
</dbReference>
<reference key="1">
    <citation type="journal article" date="2002" name="Biochem. Biophys. Res. Commun.">
        <title>Isolation and characterization of a novel F-box protein Pof10 in fission yeast.</title>
        <authorList>
            <person name="Ikebe C."/>
            <person name="Kominami K."/>
            <person name="Toda T."/>
            <person name="Nakayama K."/>
        </authorList>
    </citation>
    <scope>NUCLEOTIDE SEQUENCE [GENOMIC DNA]</scope>
</reference>
<reference key="2">
    <citation type="journal article" date="2002" name="Nature">
        <title>The genome sequence of Schizosaccharomyces pombe.</title>
        <authorList>
            <person name="Wood V."/>
            <person name="Gwilliam R."/>
            <person name="Rajandream M.A."/>
            <person name="Lyne M.H."/>
            <person name="Lyne R."/>
            <person name="Stewart A."/>
            <person name="Sgouros J.G."/>
            <person name="Peat N."/>
            <person name="Hayles J."/>
            <person name="Baker S.G."/>
            <person name="Basham D."/>
            <person name="Bowman S."/>
            <person name="Brooks K."/>
            <person name="Brown D."/>
            <person name="Brown S."/>
            <person name="Chillingworth T."/>
            <person name="Churcher C.M."/>
            <person name="Collins M."/>
            <person name="Connor R."/>
            <person name="Cronin A."/>
            <person name="Davis P."/>
            <person name="Feltwell T."/>
            <person name="Fraser A."/>
            <person name="Gentles S."/>
            <person name="Goble A."/>
            <person name="Hamlin N."/>
            <person name="Harris D.E."/>
            <person name="Hidalgo J."/>
            <person name="Hodgson G."/>
            <person name="Holroyd S."/>
            <person name="Hornsby T."/>
            <person name="Howarth S."/>
            <person name="Huckle E.J."/>
            <person name="Hunt S."/>
            <person name="Jagels K."/>
            <person name="James K.D."/>
            <person name="Jones L."/>
            <person name="Jones M."/>
            <person name="Leather S."/>
            <person name="McDonald S."/>
            <person name="McLean J."/>
            <person name="Mooney P."/>
            <person name="Moule S."/>
            <person name="Mungall K.L."/>
            <person name="Murphy L.D."/>
            <person name="Niblett D."/>
            <person name="Odell C."/>
            <person name="Oliver K."/>
            <person name="O'Neil S."/>
            <person name="Pearson D."/>
            <person name="Quail M.A."/>
            <person name="Rabbinowitsch E."/>
            <person name="Rutherford K.M."/>
            <person name="Rutter S."/>
            <person name="Saunders D."/>
            <person name="Seeger K."/>
            <person name="Sharp S."/>
            <person name="Skelton J."/>
            <person name="Simmonds M.N."/>
            <person name="Squares R."/>
            <person name="Squares S."/>
            <person name="Stevens K."/>
            <person name="Taylor K."/>
            <person name="Taylor R.G."/>
            <person name="Tivey A."/>
            <person name="Walsh S.V."/>
            <person name="Warren T."/>
            <person name="Whitehead S."/>
            <person name="Woodward J.R."/>
            <person name="Volckaert G."/>
            <person name="Aert R."/>
            <person name="Robben J."/>
            <person name="Grymonprez B."/>
            <person name="Weltjens I."/>
            <person name="Vanstreels E."/>
            <person name="Rieger M."/>
            <person name="Schaefer M."/>
            <person name="Mueller-Auer S."/>
            <person name="Gabel C."/>
            <person name="Fuchs M."/>
            <person name="Duesterhoeft A."/>
            <person name="Fritzc C."/>
            <person name="Holzer E."/>
            <person name="Moestl D."/>
            <person name="Hilbert H."/>
            <person name="Borzym K."/>
            <person name="Langer I."/>
            <person name="Beck A."/>
            <person name="Lehrach H."/>
            <person name="Reinhardt R."/>
            <person name="Pohl T.M."/>
            <person name="Eger P."/>
            <person name="Zimmermann W."/>
            <person name="Wedler H."/>
            <person name="Wambutt R."/>
            <person name="Purnelle B."/>
            <person name="Goffeau A."/>
            <person name="Cadieu E."/>
            <person name="Dreano S."/>
            <person name="Gloux S."/>
            <person name="Lelaure V."/>
            <person name="Mottier S."/>
            <person name="Galibert F."/>
            <person name="Aves S.J."/>
            <person name="Xiang Z."/>
            <person name="Hunt C."/>
            <person name="Moore K."/>
            <person name="Hurst S.M."/>
            <person name="Lucas M."/>
            <person name="Rochet M."/>
            <person name="Gaillardin C."/>
            <person name="Tallada V.A."/>
            <person name="Garzon A."/>
            <person name="Thode G."/>
            <person name="Daga R.R."/>
            <person name="Cruzado L."/>
            <person name="Jimenez J."/>
            <person name="Sanchez M."/>
            <person name="del Rey F."/>
            <person name="Benito J."/>
            <person name="Dominguez A."/>
            <person name="Revuelta J.L."/>
            <person name="Moreno S."/>
            <person name="Armstrong J."/>
            <person name="Forsburg S.L."/>
            <person name="Cerutti L."/>
            <person name="Lowe T."/>
            <person name="McCombie W.R."/>
            <person name="Paulsen I."/>
            <person name="Potashkin J."/>
            <person name="Shpakovski G.V."/>
            <person name="Ussery D."/>
            <person name="Barrell B.G."/>
            <person name="Nurse P."/>
        </authorList>
    </citation>
    <scope>NUCLEOTIDE SEQUENCE [LARGE SCALE GENOMIC DNA]</scope>
    <source>
        <strain>972 / ATCC 24843</strain>
    </source>
</reference>
<reference key="3">
    <citation type="journal article" date="2004" name="Genes Cells">
        <title>Molecular interactions of fission yeast Skp1 and its role in the DNA damage checkpoint.</title>
        <authorList>
            <person name="Lehmann A."/>
            <person name="Katayama S."/>
            <person name="Harrison C."/>
            <person name="Dhut S."/>
            <person name="Kitamura K."/>
            <person name="McDonald N."/>
            <person name="Toda T."/>
        </authorList>
    </citation>
    <scope>INTERACTION WITH SKP1</scope>
</reference>
<reference key="4">
    <citation type="journal article" date="2005" name="EMBO J.">
        <title>SCF(Pof1)-ubiquitin and its target Zip1 transcription factor mediate cadmium response in fission yeast.</title>
        <authorList>
            <person name="Harrison C."/>
            <person name="Katayama S."/>
            <person name="Dhut S."/>
            <person name="Chen D."/>
            <person name="Jones N."/>
            <person name="Bahler J."/>
            <person name="Toda T."/>
        </authorList>
    </citation>
    <scope>FUNCTION</scope>
    <scope>SUBUNIT</scope>
    <scope>MUTAGENESIS OF PHE-109; SER-118; LYS-246 AND SER-566</scope>
</reference>
<reference key="5">
    <citation type="journal article" date="2006" name="Nat. Biotechnol.">
        <title>ORFeome cloning and global analysis of protein localization in the fission yeast Schizosaccharomyces pombe.</title>
        <authorList>
            <person name="Matsuyama A."/>
            <person name="Arai R."/>
            <person name="Yashiroda Y."/>
            <person name="Shirai A."/>
            <person name="Kamata A."/>
            <person name="Sekido S."/>
            <person name="Kobayashi Y."/>
            <person name="Hashimoto A."/>
            <person name="Hamamoto M."/>
            <person name="Hiraoka Y."/>
            <person name="Horinouchi S."/>
            <person name="Yoshida M."/>
        </authorList>
    </citation>
    <scope>SUBCELLULAR LOCATION [LARGE SCALE ANALYSIS]</scope>
</reference>
<reference key="6">
    <citation type="journal article" date="2008" name="J. Proteome Res.">
        <title>Phosphoproteome analysis of fission yeast.</title>
        <authorList>
            <person name="Wilson-Grady J.T."/>
            <person name="Villen J."/>
            <person name="Gygi S.P."/>
        </authorList>
    </citation>
    <scope>PHOSPHORYLATION [LARGE SCALE ANALYSIS] AT SER-229 AND SER-232</scope>
    <scope>IDENTIFICATION BY MASS SPECTROMETRY</scope>
</reference>
<feature type="chain" id="PRO_0000051136" description="F-box/WD repeat-containing protein pof1">
    <location>
        <begin position="1"/>
        <end position="605"/>
    </location>
</feature>
<feature type="domain" description="F-box" evidence="1">
    <location>
        <begin position="107"/>
        <end position="153"/>
    </location>
</feature>
<feature type="repeat" description="WD 1">
    <location>
        <begin position="271"/>
        <end position="299"/>
    </location>
</feature>
<feature type="repeat" description="WD 2">
    <location>
        <begin position="311"/>
        <end position="339"/>
    </location>
</feature>
<feature type="repeat" description="WD 3">
    <location>
        <begin position="350"/>
        <end position="379"/>
    </location>
</feature>
<feature type="repeat" description="WD 4">
    <location>
        <begin position="390"/>
        <end position="420"/>
    </location>
</feature>
<feature type="repeat" description="WD 5">
    <location>
        <begin position="432"/>
        <end position="460"/>
    </location>
</feature>
<feature type="repeat" description="WD 6">
    <location>
        <begin position="472"/>
        <end position="500"/>
    </location>
</feature>
<feature type="repeat" description="WD 7">
    <location>
        <begin position="510"/>
        <end position="538"/>
    </location>
</feature>
<feature type="region of interest" description="Disordered" evidence="2">
    <location>
        <begin position="195"/>
        <end position="231"/>
    </location>
</feature>
<feature type="compositionally biased region" description="Basic and acidic residues" evidence="2">
    <location>
        <begin position="195"/>
        <end position="212"/>
    </location>
</feature>
<feature type="compositionally biased region" description="Polar residues" evidence="2">
    <location>
        <begin position="214"/>
        <end position="231"/>
    </location>
</feature>
<feature type="modified residue" description="Phosphoserine" evidence="6">
    <location>
        <position position="229"/>
    </location>
</feature>
<feature type="modified residue" description="Phosphoserine" evidence="6">
    <location>
        <position position="232"/>
    </location>
</feature>
<feature type="mutagenesis site" description="Temperature sensitive induction of early growth arrest and small cell size; when associated with P-118." evidence="4">
    <original>F</original>
    <variation>S</variation>
    <location>
        <position position="109"/>
    </location>
</feature>
<feature type="mutagenesis site" description="Temperature sensitive induction of early growth arrest and small cell size; when associated with S-109." evidence="4">
    <original>S</original>
    <variation>P</variation>
    <location>
        <position position="118"/>
    </location>
</feature>
<feature type="mutagenesis site" description="Temperature sensitive induction of early growth arrest and small cell size; when associated with G-566." evidence="4">
    <original>K</original>
    <variation>E</variation>
    <location>
        <position position="246"/>
    </location>
</feature>
<feature type="mutagenesis site" description="Temperature sensitive induction of early growth arrest and small cell size; when associated with E-246." evidence="4">
    <original>S</original>
    <variation>G</variation>
    <location>
        <position position="566"/>
    </location>
</feature>
<protein>
    <recommendedName>
        <fullName>F-box/WD repeat-containing protein pof1</fullName>
    </recommendedName>
    <alternativeName>
        <fullName>Skp1-binding protein 1</fullName>
    </alternativeName>
</protein>
<proteinExistence type="evidence at protein level"/>
<sequence length="605" mass="67111">MTTGYESVPTSEPSDNLAPRAELWQRHLLEKKEGDQSISVSAFNISSMHNELSGLSEKSRQRVEAVWAAFSEASCSERKLALQGILNNCSSSLLSFASSTLDSLVRLDFLSLLPVEISFRILSFLDARSLCQAAQVSKHWKELADDDVIWHRMCEQHINRKCEKCGWGLPLLERNTLYAAKASIQKRYERLTKRGVDQAHESSPVKKAKLDDYPTSSNEETISSVKPPSPNSDSKFFLPFKTRPWKEVYAERCRVECNWRHGRCRQVVLSGHSDGVMCLQLVRNILASGSYDATIRLWNLATFQQVALLEGHSSGVTCLQFDQCKLISGSMDKTIRIWNYRTSECISILHGHTDSVLCLTFDSTLLVSGSADCTVKLWHFSGGKRITLRGHTGPVNSVRIIRDRGLVLSGSDDSTIKIWSLETNTCLHTFSAHIGPVQSLALADSRLFSCSLDGTIKQWDIEKKKCVHTLFGHIEGVWEIAADHLRLISGAHDGVVKVWEACECVHTLKNHSEPVTSVALGDCEVVSGSEDGKIYLWLFNNAPNESPVSTQSVPISSLNGQRSNSSVQRALSSVPNYSSSLSNISTRNLNIPPSNANNDDVSIQS</sequence>
<keyword id="KW-0539">Nucleus</keyword>
<keyword id="KW-0597">Phosphoprotein</keyword>
<keyword id="KW-1185">Reference proteome</keyword>
<keyword id="KW-0677">Repeat</keyword>
<keyword id="KW-0833">Ubl conjugation pathway</keyword>
<keyword id="KW-0853">WD repeat</keyword>
<gene>
    <name type="primary">pof1</name>
    <name type="synonym">sbp1</name>
    <name type="ORF">SPAC57A10.05c</name>
</gene>
<accession>P87053</accession>
<comment type="function">
    <text evidence="4">Probably recognizes and binds to some phosphorylated proteins and promotes their ubiquitination and degradation. Required for the inactivation of zip1 via ubiquitination.</text>
</comment>
<comment type="subunit">
    <text evidence="3 4">A part of the E3 ubiquitin ligase Skp1-Cullin-1-F-box (SCF) complex. Interacts with cul1, skp1 and phosphorylated zip1.</text>
</comment>
<comment type="interaction">
    <interactant intactId="EBI-1185435">
        <id>P87053</id>
    </interactant>
    <interactant intactId="EBI-1172248">
        <id>Q9Y709</id>
        <label>skp1</label>
    </interactant>
    <organismsDiffer>false</organismsDiffer>
    <experiments>2</experiments>
</comment>
<comment type="subcellular location">
    <subcellularLocation>
        <location evidence="5">Nucleus</location>
    </subcellularLocation>
</comment>